<organism>
    <name type="scientific">Parvibaculum lavamentivorans (strain DS-1 / DSM 13023 / NCIMB 13966)</name>
    <dbReference type="NCBI Taxonomy" id="402881"/>
    <lineage>
        <taxon>Bacteria</taxon>
        <taxon>Pseudomonadati</taxon>
        <taxon>Pseudomonadota</taxon>
        <taxon>Alphaproteobacteria</taxon>
        <taxon>Hyphomicrobiales</taxon>
        <taxon>Parvibaculaceae</taxon>
        <taxon>Parvibaculum</taxon>
    </lineage>
</organism>
<protein>
    <recommendedName>
        <fullName evidence="1">NADH-quinone oxidoreductase subunit D</fullName>
        <ecNumber evidence="1">7.1.1.-</ecNumber>
    </recommendedName>
    <alternativeName>
        <fullName evidence="1">NADH dehydrogenase I subunit D</fullName>
    </alternativeName>
    <alternativeName>
        <fullName evidence="1">NDH-1 subunit D</fullName>
    </alternativeName>
</protein>
<evidence type="ECO:0000255" key="1">
    <source>
        <dbReference type="HAMAP-Rule" id="MF_01358"/>
    </source>
</evidence>
<accession>A7HY46</accession>
<sequence length="392" mass="44488">MAEQELRNYHLNFGPQHPAAHGVLRLVLELDGEVVERVDPHIGLLHRGTEKLIEYKTYLQATPYFDRLDYVAPMNQEHAFVLAAERLLGLEVPRRAQFIRVLYSEIGRILAHLLNVTTQAMDVGALTPPLWGFEEREKLMIFYERASGARLHANYFRTGGVHRDLPPKLLEDIYNFCDPCSQVLDDLEGLITDNRIFKQRNVDIGVVSQEEALEWGFSGVMVRGSGMAWDLRRAQPYEVYSELDFDIPVGKNGDCYDRYLCRMEEMRQSLRIMKQCIELMPGGPVHVLDGKVVPPSRSEMKRSMEALIHHFKLYTEGYHVPAGEVYAAVEAPKGEFGVYLVSDGGNKPYKCKIRAPGYAHLQAMDHLCKGHMLADVSAILGSIDIVFGEVDR</sequence>
<keyword id="KW-0997">Cell inner membrane</keyword>
<keyword id="KW-1003">Cell membrane</keyword>
<keyword id="KW-0472">Membrane</keyword>
<keyword id="KW-0520">NAD</keyword>
<keyword id="KW-0874">Quinone</keyword>
<keyword id="KW-1185">Reference proteome</keyword>
<keyword id="KW-1278">Translocase</keyword>
<keyword id="KW-0813">Transport</keyword>
<keyword id="KW-0830">Ubiquinone</keyword>
<gene>
    <name evidence="1" type="primary">nuoD</name>
    <name type="ordered locus">Plav_3223</name>
</gene>
<proteinExistence type="inferred from homology"/>
<feature type="chain" id="PRO_0000357883" description="NADH-quinone oxidoreductase subunit D">
    <location>
        <begin position="1"/>
        <end position="392"/>
    </location>
</feature>
<reference key="1">
    <citation type="journal article" date="2011" name="Stand. Genomic Sci.">
        <title>Complete genome sequence of Parvibaculum lavamentivorans type strain (DS-1(T)).</title>
        <authorList>
            <person name="Schleheck D."/>
            <person name="Weiss M."/>
            <person name="Pitluck S."/>
            <person name="Bruce D."/>
            <person name="Land M.L."/>
            <person name="Han S."/>
            <person name="Saunders E."/>
            <person name="Tapia R."/>
            <person name="Detter C."/>
            <person name="Brettin T."/>
            <person name="Han J."/>
            <person name="Woyke T."/>
            <person name="Goodwin L."/>
            <person name="Pennacchio L."/>
            <person name="Nolan M."/>
            <person name="Cook A.M."/>
            <person name="Kjelleberg S."/>
            <person name="Thomas T."/>
        </authorList>
    </citation>
    <scope>NUCLEOTIDE SEQUENCE [LARGE SCALE GENOMIC DNA]</scope>
    <source>
        <strain>DS-1 / DSM 13023 / NCIMB 13966</strain>
    </source>
</reference>
<comment type="function">
    <text evidence="1">NDH-1 shuttles electrons from NADH, via FMN and iron-sulfur (Fe-S) centers, to quinones in the respiratory chain. The immediate electron acceptor for the enzyme in this species is believed to be ubiquinone. Couples the redox reaction to proton translocation (for every two electrons transferred, four hydrogen ions are translocated across the cytoplasmic membrane), and thus conserves the redox energy in a proton gradient.</text>
</comment>
<comment type="catalytic activity">
    <reaction evidence="1">
        <text>a quinone + NADH + 5 H(+)(in) = a quinol + NAD(+) + 4 H(+)(out)</text>
        <dbReference type="Rhea" id="RHEA:57888"/>
        <dbReference type="ChEBI" id="CHEBI:15378"/>
        <dbReference type="ChEBI" id="CHEBI:24646"/>
        <dbReference type="ChEBI" id="CHEBI:57540"/>
        <dbReference type="ChEBI" id="CHEBI:57945"/>
        <dbReference type="ChEBI" id="CHEBI:132124"/>
    </reaction>
</comment>
<comment type="subunit">
    <text evidence="1">NDH-1 is composed of 14 different subunits. Subunits NuoB, C, D, E, F, and G constitute the peripheral sector of the complex.</text>
</comment>
<comment type="subcellular location">
    <subcellularLocation>
        <location evidence="1">Cell inner membrane</location>
        <topology evidence="1">Peripheral membrane protein</topology>
        <orientation evidence="1">Cytoplasmic side</orientation>
    </subcellularLocation>
</comment>
<comment type="similarity">
    <text evidence="1">Belongs to the complex I 49 kDa subunit family.</text>
</comment>
<name>NUOD_PARL1</name>
<dbReference type="EC" id="7.1.1.-" evidence="1"/>
<dbReference type="EMBL" id="CP000774">
    <property type="protein sequence ID" value="ABS64829.1"/>
    <property type="molecule type" value="Genomic_DNA"/>
</dbReference>
<dbReference type="RefSeq" id="WP_012112157.1">
    <property type="nucleotide sequence ID" value="NC_009719.1"/>
</dbReference>
<dbReference type="SMR" id="A7HY46"/>
<dbReference type="STRING" id="402881.Plav_3223"/>
<dbReference type="KEGG" id="pla:Plav_3223"/>
<dbReference type="eggNOG" id="COG0649">
    <property type="taxonomic scope" value="Bacteria"/>
</dbReference>
<dbReference type="HOGENOM" id="CLU_015134_1_1_5"/>
<dbReference type="OrthoDB" id="9801496at2"/>
<dbReference type="Proteomes" id="UP000006377">
    <property type="component" value="Chromosome"/>
</dbReference>
<dbReference type="GO" id="GO:0005886">
    <property type="term" value="C:plasma membrane"/>
    <property type="evidence" value="ECO:0007669"/>
    <property type="project" value="UniProtKB-SubCell"/>
</dbReference>
<dbReference type="GO" id="GO:0051287">
    <property type="term" value="F:NAD binding"/>
    <property type="evidence" value="ECO:0007669"/>
    <property type="project" value="InterPro"/>
</dbReference>
<dbReference type="GO" id="GO:0050136">
    <property type="term" value="F:NADH:ubiquinone reductase (non-electrogenic) activity"/>
    <property type="evidence" value="ECO:0007669"/>
    <property type="project" value="UniProtKB-UniRule"/>
</dbReference>
<dbReference type="GO" id="GO:0048038">
    <property type="term" value="F:quinone binding"/>
    <property type="evidence" value="ECO:0007669"/>
    <property type="project" value="UniProtKB-KW"/>
</dbReference>
<dbReference type="FunFam" id="1.10.645.10:FF:000005">
    <property type="entry name" value="NADH-quinone oxidoreductase subunit D"/>
    <property type="match status" value="1"/>
</dbReference>
<dbReference type="Gene3D" id="1.10.645.10">
    <property type="entry name" value="Cytochrome-c3 Hydrogenase, chain B"/>
    <property type="match status" value="1"/>
</dbReference>
<dbReference type="HAMAP" id="MF_01358">
    <property type="entry name" value="NDH1_NuoD"/>
    <property type="match status" value="1"/>
</dbReference>
<dbReference type="InterPro" id="IPR001135">
    <property type="entry name" value="NADH_Q_OxRdtase_suD"/>
</dbReference>
<dbReference type="InterPro" id="IPR014029">
    <property type="entry name" value="NADH_UbQ_OxRdtase_49kDa_CS"/>
</dbReference>
<dbReference type="InterPro" id="IPR022885">
    <property type="entry name" value="NDH1_su_D/H"/>
</dbReference>
<dbReference type="InterPro" id="IPR029014">
    <property type="entry name" value="NiFe-Hase_large"/>
</dbReference>
<dbReference type="NCBIfam" id="TIGR01962">
    <property type="entry name" value="NuoD"/>
    <property type="match status" value="1"/>
</dbReference>
<dbReference type="NCBIfam" id="NF004739">
    <property type="entry name" value="PRK06075.1"/>
    <property type="match status" value="1"/>
</dbReference>
<dbReference type="PANTHER" id="PTHR11993:SF10">
    <property type="entry name" value="NADH DEHYDROGENASE [UBIQUINONE] IRON-SULFUR PROTEIN 2, MITOCHONDRIAL"/>
    <property type="match status" value="1"/>
</dbReference>
<dbReference type="PANTHER" id="PTHR11993">
    <property type="entry name" value="NADH-UBIQUINONE OXIDOREDUCTASE 49 KDA SUBUNIT"/>
    <property type="match status" value="1"/>
</dbReference>
<dbReference type="Pfam" id="PF00346">
    <property type="entry name" value="Complex1_49kDa"/>
    <property type="match status" value="1"/>
</dbReference>
<dbReference type="SUPFAM" id="SSF56762">
    <property type="entry name" value="HydB/Nqo4-like"/>
    <property type="match status" value="1"/>
</dbReference>
<dbReference type="PROSITE" id="PS00535">
    <property type="entry name" value="COMPLEX1_49K"/>
    <property type="match status" value="1"/>
</dbReference>